<protein>
    <recommendedName>
        <fullName evidence="1">Chorismate synthase</fullName>
        <shortName evidence="1">CS</shortName>
        <ecNumber evidence="1">4.2.3.5</ecNumber>
    </recommendedName>
    <alternativeName>
        <fullName evidence="1">5-enolpyruvylshikimate-3-phosphate phospholyase</fullName>
    </alternativeName>
</protein>
<dbReference type="EC" id="4.2.3.5" evidence="1"/>
<dbReference type="EMBL" id="CT573213">
    <property type="protein sequence ID" value="CAJ63880.1"/>
    <property type="status" value="ALT_INIT"/>
    <property type="molecule type" value="Genomic_DNA"/>
</dbReference>
<dbReference type="RefSeq" id="WP_011606338.1">
    <property type="nucleotide sequence ID" value="NC_008278.1"/>
</dbReference>
<dbReference type="SMR" id="Q0RF70"/>
<dbReference type="STRING" id="326424.FRAAL5247"/>
<dbReference type="KEGG" id="fal:FRAAL5247"/>
<dbReference type="eggNOG" id="COG0082">
    <property type="taxonomic scope" value="Bacteria"/>
</dbReference>
<dbReference type="HOGENOM" id="CLU_034547_2_0_11"/>
<dbReference type="OrthoDB" id="9771806at2"/>
<dbReference type="UniPathway" id="UPA00053">
    <property type="reaction ID" value="UER00090"/>
</dbReference>
<dbReference type="Proteomes" id="UP000000657">
    <property type="component" value="Chromosome"/>
</dbReference>
<dbReference type="GO" id="GO:0005829">
    <property type="term" value="C:cytosol"/>
    <property type="evidence" value="ECO:0007669"/>
    <property type="project" value="TreeGrafter"/>
</dbReference>
<dbReference type="GO" id="GO:0004107">
    <property type="term" value="F:chorismate synthase activity"/>
    <property type="evidence" value="ECO:0007669"/>
    <property type="project" value="UniProtKB-UniRule"/>
</dbReference>
<dbReference type="GO" id="GO:0010181">
    <property type="term" value="F:FMN binding"/>
    <property type="evidence" value="ECO:0007669"/>
    <property type="project" value="TreeGrafter"/>
</dbReference>
<dbReference type="GO" id="GO:0008652">
    <property type="term" value="P:amino acid biosynthetic process"/>
    <property type="evidence" value="ECO:0007669"/>
    <property type="project" value="UniProtKB-KW"/>
</dbReference>
<dbReference type="GO" id="GO:0009073">
    <property type="term" value="P:aromatic amino acid family biosynthetic process"/>
    <property type="evidence" value="ECO:0007669"/>
    <property type="project" value="UniProtKB-KW"/>
</dbReference>
<dbReference type="GO" id="GO:0009423">
    <property type="term" value="P:chorismate biosynthetic process"/>
    <property type="evidence" value="ECO:0007669"/>
    <property type="project" value="UniProtKB-UniRule"/>
</dbReference>
<dbReference type="CDD" id="cd07304">
    <property type="entry name" value="Chorismate_synthase"/>
    <property type="match status" value="1"/>
</dbReference>
<dbReference type="FunFam" id="3.60.150.10:FF:000002">
    <property type="entry name" value="Chorismate synthase"/>
    <property type="match status" value="1"/>
</dbReference>
<dbReference type="Gene3D" id="3.60.150.10">
    <property type="entry name" value="Chorismate synthase AroC"/>
    <property type="match status" value="1"/>
</dbReference>
<dbReference type="HAMAP" id="MF_00300">
    <property type="entry name" value="Chorismate_synth"/>
    <property type="match status" value="1"/>
</dbReference>
<dbReference type="InterPro" id="IPR000453">
    <property type="entry name" value="Chorismate_synth"/>
</dbReference>
<dbReference type="InterPro" id="IPR035904">
    <property type="entry name" value="Chorismate_synth_AroC_sf"/>
</dbReference>
<dbReference type="InterPro" id="IPR020541">
    <property type="entry name" value="Chorismate_synthase_CS"/>
</dbReference>
<dbReference type="NCBIfam" id="TIGR00033">
    <property type="entry name" value="aroC"/>
    <property type="match status" value="1"/>
</dbReference>
<dbReference type="NCBIfam" id="NF003793">
    <property type="entry name" value="PRK05382.1"/>
    <property type="match status" value="1"/>
</dbReference>
<dbReference type="PANTHER" id="PTHR21085">
    <property type="entry name" value="CHORISMATE SYNTHASE"/>
    <property type="match status" value="1"/>
</dbReference>
<dbReference type="PANTHER" id="PTHR21085:SF0">
    <property type="entry name" value="CHORISMATE SYNTHASE"/>
    <property type="match status" value="1"/>
</dbReference>
<dbReference type="Pfam" id="PF01264">
    <property type="entry name" value="Chorismate_synt"/>
    <property type="match status" value="1"/>
</dbReference>
<dbReference type="PIRSF" id="PIRSF001456">
    <property type="entry name" value="Chorismate_synth"/>
    <property type="match status" value="1"/>
</dbReference>
<dbReference type="SUPFAM" id="SSF103263">
    <property type="entry name" value="Chorismate synthase, AroC"/>
    <property type="match status" value="1"/>
</dbReference>
<dbReference type="PROSITE" id="PS00787">
    <property type="entry name" value="CHORISMATE_SYNTHASE_1"/>
    <property type="match status" value="1"/>
</dbReference>
<dbReference type="PROSITE" id="PS00789">
    <property type="entry name" value="CHORISMATE_SYNTHASE_3"/>
    <property type="match status" value="1"/>
</dbReference>
<comment type="function">
    <text evidence="1">Catalyzes the anti-1,4-elimination of the C-3 phosphate and the C-6 proR hydrogen from 5-enolpyruvylshikimate-3-phosphate (EPSP) to yield chorismate, which is the branch point compound that serves as the starting substrate for the three terminal pathways of aromatic amino acid biosynthesis. This reaction introduces a second double bond into the aromatic ring system.</text>
</comment>
<comment type="catalytic activity">
    <reaction evidence="1">
        <text>5-O-(1-carboxyvinyl)-3-phosphoshikimate = chorismate + phosphate</text>
        <dbReference type="Rhea" id="RHEA:21020"/>
        <dbReference type="ChEBI" id="CHEBI:29748"/>
        <dbReference type="ChEBI" id="CHEBI:43474"/>
        <dbReference type="ChEBI" id="CHEBI:57701"/>
        <dbReference type="EC" id="4.2.3.5"/>
    </reaction>
</comment>
<comment type="cofactor">
    <cofactor evidence="1">
        <name>FMNH2</name>
        <dbReference type="ChEBI" id="CHEBI:57618"/>
    </cofactor>
    <text evidence="1">Reduced FMN (FMNH(2)).</text>
</comment>
<comment type="pathway">
    <text evidence="1">Metabolic intermediate biosynthesis; chorismate biosynthesis; chorismate from D-erythrose 4-phosphate and phosphoenolpyruvate: step 7/7.</text>
</comment>
<comment type="subunit">
    <text evidence="1">Homotetramer.</text>
</comment>
<comment type="similarity">
    <text evidence="1">Belongs to the chorismate synthase family.</text>
</comment>
<comment type="sequence caution" evidence="2">
    <conflict type="erroneous initiation">
        <sequence resource="EMBL-CDS" id="CAJ63880"/>
    </conflict>
    <text>Truncated N-terminus.</text>
</comment>
<accession>Q0RF70</accession>
<reference key="1">
    <citation type="journal article" date="2007" name="Genome Res.">
        <title>Genome characteristics of facultatively symbiotic Frankia sp. strains reflect host range and host plant biogeography.</title>
        <authorList>
            <person name="Normand P."/>
            <person name="Lapierre P."/>
            <person name="Tisa L.S."/>
            <person name="Gogarten J.P."/>
            <person name="Alloisio N."/>
            <person name="Bagnarol E."/>
            <person name="Bassi C.A."/>
            <person name="Berry A.M."/>
            <person name="Bickhart D.M."/>
            <person name="Choisne N."/>
            <person name="Couloux A."/>
            <person name="Cournoyer B."/>
            <person name="Cruveiller S."/>
            <person name="Daubin V."/>
            <person name="Demange N."/>
            <person name="Francino M.P."/>
            <person name="Goltsman E."/>
            <person name="Huang Y."/>
            <person name="Kopp O.R."/>
            <person name="Labarre L."/>
            <person name="Lapidus A."/>
            <person name="Lavire C."/>
            <person name="Marechal J."/>
            <person name="Martinez M."/>
            <person name="Mastronunzio J.E."/>
            <person name="Mullin B.C."/>
            <person name="Niemann J."/>
            <person name="Pujic P."/>
            <person name="Rawnsley T."/>
            <person name="Rouy Z."/>
            <person name="Schenowitz C."/>
            <person name="Sellstedt A."/>
            <person name="Tavares F."/>
            <person name="Tomkins J.P."/>
            <person name="Vallenet D."/>
            <person name="Valverde C."/>
            <person name="Wall L.G."/>
            <person name="Wang Y."/>
            <person name="Medigue C."/>
            <person name="Benson D.R."/>
        </authorList>
    </citation>
    <scope>NUCLEOTIDE SEQUENCE [LARGE SCALE GENOMIC DNA]</scope>
    <source>
        <strain>DSM 45986 / CECT 9034 / ACN14a</strain>
    </source>
</reference>
<sequence length="394" mass="41162">MVRWLTAGESHGPALVATVEGLPAGIRVTSDDIAAELARRRLGHGRGARMSFERDVVELLGGLRHGVSLGGPISVVVRNSEWPKWERVMSPDPVDPAALAGLGRNAPLTRPRPGHADLAGMQKYGFDDARPVLERASARETAARVALGTAAKALLRQAYGIELLSHVVAIGAAEVPPGLPAPTSLAAIDANPVRCADQATSERMVAEIDAAQADSDTLGGIVEVLAYGCPPGLGSYVHGDRRLDARLAGELMGIQAIKGVEFGDGFTTARRRGSVAHDEIEPVGGVGRRVRRATDRAGGVEGGMTTGEPLRVRVAMKPISSLTRPLSTVDVTTGEAAVAINQRSDVCAVPAAGVVTEAMVALVLADAALEKFGGDSVEETRRNCEGYLKSLVIH</sequence>
<evidence type="ECO:0000255" key="1">
    <source>
        <dbReference type="HAMAP-Rule" id="MF_00300"/>
    </source>
</evidence>
<evidence type="ECO:0000305" key="2"/>
<keyword id="KW-0028">Amino-acid biosynthesis</keyword>
<keyword id="KW-0057">Aromatic amino acid biosynthesis</keyword>
<keyword id="KW-0274">FAD</keyword>
<keyword id="KW-0285">Flavoprotein</keyword>
<keyword id="KW-0288">FMN</keyword>
<keyword id="KW-0456">Lyase</keyword>
<keyword id="KW-0521">NADP</keyword>
<keyword id="KW-1185">Reference proteome</keyword>
<feature type="chain" id="PRO_0000322401" description="Chorismate synthase">
    <location>
        <begin position="1"/>
        <end position="394"/>
    </location>
</feature>
<feature type="binding site" evidence="1">
    <location>
        <position position="40"/>
    </location>
    <ligand>
        <name>NADP(+)</name>
        <dbReference type="ChEBI" id="CHEBI:58349"/>
    </ligand>
</feature>
<feature type="binding site" evidence="1">
    <location>
        <position position="46"/>
    </location>
    <ligand>
        <name>NADP(+)</name>
        <dbReference type="ChEBI" id="CHEBI:58349"/>
    </ligand>
</feature>
<feature type="binding site" evidence="1">
    <location>
        <begin position="135"/>
        <end position="137"/>
    </location>
    <ligand>
        <name>FMN</name>
        <dbReference type="ChEBI" id="CHEBI:58210"/>
    </ligand>
</feature>
<feature type="binding site" evidence="1">
    <location>
        <begin position="255"/>
        <end position="256"/>
    </location>
    <ligand>
        <name>FMN</name>
        <dbReference type="ChEBI" id="CHEBI:58210"/>
    </ligand>
</feature>
<feature type="binding site" evidence="1">
    <location>
        <position position="302"/>
    </location>
    <ligand>
        <name>FMN</name>
        <dbReference type="ChEBI" id="CHEBI:58210"/>
    </ligand>
</feature>
<feature type="binding site" evidence="1">
    <location>
        <begin position="317"/>
        <end position="321"/>
    </location>
    <ligand>
        <name>FMN</name>
        <dbReference type="ChEBI" id="CHEBI:58210"/>
    </ligand>
</feature>
<feature type="binding site" evidence="1">
    <location>
        <position position="343"/>
    </location>
    <ligand>
        <name>FMN</name>
        <dbReference type="ChEBI" id="CHEBI:58210"/>
    </ligand>
</feature>
<gene>
    <name evidence="1" type="primary">aroC</name>
    <name type="ordered locus">FRAAL5247</name>
</gene>
<proteinExistence type="inferred from homology"/>
<organism>
    <name type="scientific">Frankia alni (strain DSM 45986 / CECT 9034 / ACN14a)</name>
    <dbReference type="NCBI Taxonomy" id="326424"/>
    <lineage>
        <taxon>Bacteria</taxon>
        <taxon>Bacillati</taxon>
        <taxon>Actinomycetota</taxon>
        <taxon>Actinomycetes</taxon>
        <taxon>Frankiales</taxon>
        <taxon>Frankiaceae</taxon>
        <taxon>Frankia</taxon>
    </lineage>
</organism>
<name>AROC_FRAAA</name>